<accession>B8JE33</accession>
<keyword id="KW-0066">ATP synthesis</keyword>
<keyword id="KW-0375">Hydrogen ion transport</keyword>
<keyword id="KW-0406">Ion transport</keyword>
<keyword id="KW-0813">Transport</keyword>
<name>VATD_ANAD2</name>
<proteinExistence type="inferred from homology"/>
<reference key="1">
    <citation type="submission" date="2009-01" db="EMBL/GenBank/DDBJ databases">
        <title>Complete sequence of Anaeromyxobacter dehalogenans 2CP-1.</title>
        <authorList>
            <person name="Lucas S."/>
            <person name="Copeland A."/>
            <person name="Lapidus A."/>
            <person name="Glavina del Rio T."/>
            <person name="Dalin E."/>
            <person name="Tice H."/>
            <person name="Bruce D."/>
            <person name="Goodwin L."/>
            <person name="Pitluck S."/>
            <person name="Saunders E."/>
            <person name="Brettin T."/>
            <person name="Detter J.C."/>
            <person name="Han C."/>
            <person name="Larimer F."/>
            <person name="Land M."/>
            <person name="Hauser L."/>
            <person name="Kyrpides N."/>
            <person name="Ovchinnikova G."/>
            <person name="Beliaev A.S."/>
            <person name="Richardson P."/>
        </authorList>
    </citation>
    <scope>NUCLEOTIDE SEQUENCE [LARGE SCALE GENOMIC DNA]</scope>
    <source>
        <strain>2CP-1 / ATCC BAA-258</strain>
    </source>
</reference>
<sequence>MSRAATTRMGLLEVRARRAVAGKGARLLRAKREVLASELWKLVHDVLEGRARLDEALHRAVKALELAKALEGEERLASLALPAARAVPLAVTVRRVWGVPTPSVAAPPLVRAADQRGSSPVSWGPSGADAARHHEESLEVLLTIASKELHLARLGEEIRETSRRINALEQLVLPALRSEASRIAAALDERDREDAVRLRRFRARHPRPA</sequence>
<dbReference type="EMBL" id="CP001359">
    <property type="protein sequence ID" value="ACL66098.1"/>
    <property type="molecule type" value="Genomic_DNA"/>
</dbReference>
<dbReference type="RefSeq" id="WP_012633859.1">
    <property type="nucleotide sequence ID" value="NC_011891.1"/>
</dbReference>
<dbReference type="SMR" id="B8JE33"/>
<dbReference type="KEGG" id="acp:A2cp1_2761"/>
<dbReference type="HOGENOM" id="CLU_069688_2_1_7"/>
<dbReference type="Proteomes" id="UP000007089">
    <property type="component" value="Chromosome"/>
</dbReference>
<dbReference type="GO" id="GO:0005524">
    <property type="term" value="F:ATP binding"/>
    <property type="evidence" value="ECO:0007669"/>
    <property type="project" value="UniProtKB-UniRule"/>
</dbReference>
<dbReference type="GO" id="GO:0046933">
    <property type="term" value="F:proton-transporting ATP synthase activity, rotational mechanism"/>
    <property type="evidence" value="ECO:0007669"/>
    <property type="project" value="UniProtKB-UniRule"/>
</dbReference>
<dbReference type="GO" id="GO:0046961">
    <property type="term" value="F:proton-transporting ATPase activity, rotational mechanism"/>
    <property type="evidence" value="ECO:0007669"/>
    <property type="project" value="InterPro"/>
</dbReference>
<dbReference type="GO" id="GO:0042777">
    <property type="term" value="P:proton motive force-driven plasma membrane ATP synthesis"/>
    <property type="evidence" value="ECO:0007669"/>
    <property type="project" value="UniProtKB-UniRule"/>
</dbReference>
<dbReference type="Gene3D" id="1.10.287.3240">
    <property type="match status" value="1"/>
</dbReference>
<dbReference type="HAMAP" id="MF_00271">
    <property type="entry name" value="ATP_synth_D_arch"/>
    <property type="match status" value="1"/>
</dbReference>
<dbReference type="InterPro" id="IPR002699">
    <property type="entry name" value="V_ATPase_D"/>
</dbReference>
<dbReference type="NCBIfam" id="TIGR00309">
    <property type="entry name" value="V_ATPase_subD"/>
    <property type="match status" value="1"/>
</dbReference>
<dbReference type="PANTHER" id="PTHR11671">
    <property type="entry name" value="V-TYPE ATP SYNTHASE SUBUNIT D"/>
    <property type="match status" value="1"/>
</dbReference>
<dbReference type="Pfam" id="PF01813">
    <property type="entry name" value="ATP-synt_D"/>
    <property type="match status" value="1"/>
</dbReference>
<organism>
    <name type="scientific">Anaeromyxobacter dehalogenans (strain 2CP-1 / ATCC BAA-258)</name>
    <dbReference type="NCBI Taxonomy" id="455488"/>
    <lineage>
        <taxon>Bacteria</taxon>
        <taxon>Pseudomonadati</taxon>
        <taxon>Myxococcota</taxon>
        <taxon>Myxococcia</taxon>
        <taxon>Myxococcales</taxon>
        <taxon>Cystobacterineae</taxon>
        <taxon>Anaeromyxobacteraceae</taxon>
        <taxon>Anaeromyxobacter</taxon>
    </lineage>
</organism>
<feature type="chain" id="PRO_1000173512" description="V-type ATP synthase subunit D">
    <location>
        <begin position="1"/>
        <end position="209"/>
    </location>
</feature>
<evidence type="ECO:0000255" key="1">
    <source>
        <dbReference type="HAMAP-Rule" id="MF_00271"/>
    </source>
</evidence>
<comment type="function">
    <text evidence="1">Produces ATP from ADP in the presence of a proton gradient across the membrane.</text>
</comment>
<comment type="similarity">
    <text evidence="1">Belongs to the V-ATPase D subunit family.</text>
</comment>
<protein>
    <recommendedName>
        <fullName evidence="1">V-type ATP synthase subunit D</fullName>
    </recommendedName>
    <alternativeName>
        <fullName evidence="1">V-ATPase subunit D</fullName>
    </alternativeName>
</protein>
<gene>
    <name evidence="1" type="primary">atpD</name>
    <name type="ordered locus">A2cp1_2761</name>
</gene>